<name>NB2_MYCUA</name>
<organism>
    <name type="scientific">Mycobacterium ulcerans (strain Agy99)</name>
    <dbReference type="NCBI Taxonomy" id="362242"/>
    <lineage>
        <taxon>Bacteria</taxon>
        <taxon>Bacillati</taxon>
        <taxon>Actinomycetota</taxon>
        <taxon>Actinomycetes</taxon>
        <taxon>Mycobacteriales</taxon>
        <taxon>Mycobacteriaceae</taxon>
        <taxon>Mycobacterium</taxon>
        <taxon>Mycobacterium ulcerans group</taxon>
    </lineage>
</organism>
<feature type="chain" id="PRO_0000356938" description="Peroxynitrite isomerase 2">
    <location>
        <begin position="1"/>
        <end position="161"/>
    </location>
</feature>
<feature type="short sequence motif" description="GXWXGXG" evidence="1">
    <location>
        <begin position="17"/>
        <end position="23"/>
    </location>
</feature>
<feature type="binding site" description="axial binding residue" evidence="1">
    <location>
        <position position="152"/>
    </location>
    <ligand>
        <name>heme b</name>
        <dbReference type="ChEBI" id="CHEBI:60344"/>
    </ligand>
    <ligandPart>
        <name>Fe</name>
        <dbReference type="ChEBI" id="CHEBI:18248"/>
    </ligandPart>
</feature>
<dbReference type="EC" id="5.99.-.-" evidence="1"/>
<dbReference type="EMBL" id="CP000325">
    <property type="protein sequence ID" value="ABL05542.1"/>
    <property type="molecule type" value="Genomic_DNA"/>
</dbReference>
<dbReference type="RefSeq" id="WP_011741150.1">
    <property type="nucleotide sequence ID" value="NC_008611.1"/>
</dbReference>
<dbReference type="SMR" id="A0PT73"/>
<dbReference type="KEGG" id="mul:MUL_3360"/>
<dbReference type="eggNOG" id="COG4044">
    <property type="taxonomic scope" value="Bacteria"/>
</dbReference>
<dbReference type="HOGENOM" id="CLU_085483_1_0_11"/>
<dbReference type="Proteomes" id="UP000000765">
    <property type="component" value="Chromosome"/>
</dbReference>
<dbReference type="GO" id="GO:0020037">
    <property type="term" value="F:heme binding"/>
    <property type="evidence" value="ECO:0007669"/>
    <property type="project" value="UniProtKB-UniRule"/>
</dbReference>
<dbReference type="GO" id="GO:0046872">
    <property type="term" value="F:metal ion binding"/>
    <property type="evidence" value="ECO:0007669"/>
    <property type="project" value="UniProtKB-KW"/>
</dbReference>
<dbReference type="GO" id="GO:0062213">
    <property type="term" value="F:peroxynitrite isomerase activity"/>
    <property type="evidence" value="ECO:0007669"/>
    <property type="project" value="UniProtKB-UniRule"/>
</dbReference>
<dbReference type="CDD" id="cd07828">
    <property type="entry name" value="lipocalin_heme-bd-THAP4-like"/>
    <property type="match status" value="1"/>
</dbReference>
<dbReference type="Gene3D" id="2.40.128.20">
    <property type="match status" value="1"/>
</dbReference>
<dbReference type="HAMAP" id="MF_01297">
    <property type="entry name" value="nitrobindin"/>
    <property type="match status" value="1"/>
</dbReference>
<dbReference type="InterPro" id="IPR012674">
    <property type="entry name" value="Calycin"/>
</dbReference>
<dbReference type="InterPro" id="IPR022939">
    <property type="entry name" value="Nb(III)_bact/plant"/>
</dbReference>
<dbReference type="InterPro" id="IPR045165">
    <property type="entry name" value="Nitrobindin"/>
</dbReference>
<dbReference type="InterPro" id="IPR054873">
    <property type="entry name" value="PeroxynitIsom"/>
</dbReference>
<dbReference type="InterPro" id="IPR014878">
    <property type="entry name" value="THAP4-like_heme-bd"/>
</dbReference>
<dbReference type="NCBIfam" id="NF045819">
    <property type="entry name" value="PeroxynitIsom"/>
    <property type="match status" value="1"/>
</dbReference>
<dbReference type="PANTHER" id="PTHR15854:SF4">
    <property type="entry name" value="PEROXYNITRITE ISOMERASE THAP4"/>
    <property type="match status" value="1"/>
</dbReference>
<dbReference type="PANTHER" id="PTHR15854">
    <property type="entry name" value="THAP4 PROTEIN"/>
    <property type="match status" value="1"/>
</dbReference>
<dbReference type="Pfam" id="PF08768">
    <property type="entry name" value="THAP4_heme-bd"/>
    <property type="match status" value="1"/>
</dbReference>
<dbReference type="SUPFAM" id="SSF50814">
    <property type="entry name" value="Lipocalins"/>
    <property type="match status" value="1"/>
</dbReference>
<reference key="1">
    <citation type="journal article" date="2007" name="Genome Res.">
        <title>Reductive evolution and niche adaptation inferred from the genome of Mycobacterium ulcerans, the causative agent of Buruli ulcer.</title>
        <authorList>
            <person name="Stinear T.P."/>
            <person name="Seemann T."/>
            <person name="Pidot S."/>
            <person name="Frigui W."/>
            <person name="Reysset G."/>
            <person name="Garnier T."/>
            <person name="Meurice G."/>
            <person name="Simon D."/>
            <person name="Bouchier C."/>
            <person name="Ma L."/>
            <person name="Tichit M."/>
            <person name="Porter J.L."/>
            <person name="Ryan J."/>
            <person name="Johnson P.D.R."/>
            <person name="Davies J.K."/>
            <person name="Jenkin G.A."/>
            <person name="Small P.L.C."/>
            <person name="Jones L.M."/>
            <person name="Tekaia F."/>
            <person name="Laval F."/>
            <person name="Daffe M."/>
            <person name="Parkhill J."/>
            <person name="Cole S.T."/>
        </authorList>
    </citation>
    <scope>NUCLEOTIDE SEQUENCE [LARGE SCALE GENOMIC DNA]</scope>
    <source>
        <strain>Agy99</strain>
    </source>
</reference>
<comment type="function">
    <text evidence="1">Heme-binding protein able to scavenge peroxynitrite and to protect free L-tyrosine against peroxynitrite-mediated nitration, by acting as a peroxynitrite isomerase that converts peroxynitrite to nitrate. Therefore, this protein likely plays a role in peroxynitrite sensing and in the detoxification of reactive nitrogen and oxygen species (RNS and ROS, respectively). Is able to bind nitric oxide (NO) in vitro, but may act as a sensor of peroxynitrite levels in vivo.</text>
</comment>
<comment type="catalytic activity">
    <reaction evidence="1">
        <text>peroxynitrite = nitrate</text>
        <dbReference type="Rhea" id="RHEA:63116"/>
        <dbReference type="ChEBI" id="CHEBI:17632"/>
        <dbReference type="ChEBI" id="CHEBI:25941"/>
    </reaction>
    <physiologicalReaction direction="left-to-right" evidence="1">
        <dbReference type="Rhea" id="RHEA:63117"/>
    </physiologicalReaction>
</comment>
<comment type="cofactor">
    <cofactor evidence="1">
        <name>heme b</name>
        <dbReference type="ChEBI" id="CHEBI:60344"/>
    </cofactor>
    <text evidence="1">Binds 1 heme b group per subunit, that coordinates a highly solvent-exposed Fe(III) atom.</text>
</comment>
<comment type="pathway">
    <text evidence="1">Nitrogen metabolism.</text>
</comment>
<comment type="subunit">
    <text evidence="1">Homodimer.</text>
</comment>
<comment type="domain">
    <text evidence="1">Forms a 10-stranded antiparallel beta-barrel structure able to accommodate a hydrophobic ligand in its interior. In fact, this fold hosts the heme group, which is located in a wide surface cleft.</text>
</comment>
<comment type="similarity">
    <text evidence="1">Belongs to the nitrobindin family.</text>
</comment>
<keyword id="KW-0349">Heme</keyword>
<keyword id="KW-0408">Iron</keyword>
<keyword id="KW-0413">Isomerase</keyword>
<keyword id="KW-0479">Metal-binding</keyword>
<gene>
    <name type="ordered locus">MUL_3360</name>
</gene>
<accession>A0PT73</accession>
<protein>
    <recommendedName>
        <fullName>Peroxynitrite isomerase 2</fullName>
        <ecNumber evidence="1">5.99.-.-</ecNumber>
    </recommendedName>
    <alternativeName>
        <fullName>Ferric nitrobindin</fullName>
        <shortName>Nb(III)</shortName>
    </alternativeName>
</protein>
<evidence type="ECO:0000255" key="1">
    <source>
        <dbReference type="HAMAP-Rule" id="MF_01297"/>
    </source>
</evidence>
<proteinExistence type="inferred from homology"/>
<sequence length="161" mass="17368">MPADLHPDLDALAPLLGTWAGQGAGEYPTIEPFEYLEEVVFSHVGKPFLVYAQKTRAVADGTPLHAETGYLRVPKPGQVELVLAHPSGITEIEVGTYSASGGVIEMEMVTTAIGMTPTAKEVTALSRSFRMVGDELSYRLRMGAVGLPLQHHLGARLRRKS</sequence>